<sequence>MSKQNQWIVGVNAVASSVENDADNVREVLIEAGSKNPRLTEIEEQARRKGIDVRRVNTQALDGVGGQVRHQGVAARYAAARLWAENELEGLVEAAAGRALVLILDGVQDPHNLGACLRSAAAAGVTAVVIPKDKSATVNATVRKTSAGAADRIPVVAVTNLARCLRDLQKQGVWLYGLAGEAEASLYSVDLRGNVGLVLGGEADGLRRLTREHCDGLVKIPMPGEIESLNVSVATGVTLFEAVRQRLGA</sequence>
<gene>
    <name evidence="1" type="primary">rlmB</name>
    <name type="ordered locus">XAC1569</name>
</gene>
<keyword id="KW-0963">Cytoplasm</keyword>
<keyword id="KW-0489">Methyltransferase</keyword>
<keyword id="KW-0698">rRNA processing</keyword>
<keyword id="KW-0949">S-adenosyl-L-methionine</keyword>
<keyword id="KW-0808">Transferase</keyword>
<evidence type="ECO:0000255" key="1">
    <source>
        <dbReference type="HAMAP-Rule" id="MF_01887"/>
    </source>
</evidence>
<feature type="chain" id="PRO_0000159809" description="23S rRNA (guanosine-2'-O-)-methyltransferase RlmB">
    <location>
        <begin position="1"/>
        <end position="249"/>
    </location>
</feature>
<feature type="binding site" evidence="1">
    <location>
        <position position="200"/>
    </location>
    <ligand>
        <name>S-adenosyl-L-methionine</name>
        <dbReference type="ChEBI" id="CHEBI:59789"/>
    </ligand>
</feature>
<feature type="binding site" evidence="1">
    <location>
        <position position="220"/>
    </location>
    <ligand>
        <name>S-adenosyl-L-methionine</name>
        <dbReference type="ChEBI" id="CHEBI:59789"/>
    </ligand>
</feature>
<feature type="binding site" evidence="1">
    <location>
        <position position="229"/>
    </location>
    <ligand>
        <name>S-adenosyl-L-methionine</name>
        <dbReference type="ChEBI" id="CHEBI:59789"/>
    </ligand>
</feature>
<proteinExistence type="inferred from homology"/>
<accession>Q8PM64</accession>
<name>RLMB_XANAC</name>
<protein>
    <recommendedName>
        <fullName evidence="1">23S rRNA (guanosine-2'-O-)-methyltransferase RlmB</fullName>
        <ecNumber evidence="1">2.1.1.185</ecNumber>
    </recommendedName>
    <alternativeName>
        <fullName evidence="1">23S rRNA (guanosine2251 2'-O)-methyltransferase</fullName>
    </alternativeName>
    <alternativeName>
        <fullName evidence="1">23S rRNA Gm2251 2'-O-methyltransferase</fullName>
    </alternativeName>
</protein>
<comment type="function">
    <text evidence="1">Specifically methylates the ribose of guanosine 2251 in 23S rRNA.</text>
</comment>
<comment type="catalytic activity">
    <reaction evidence="1">
        <text>guanosine(2251) in 23S rRNA + S-adenosyl-L-methionine = 2'-O-methylguanosine(2251) in 23S rRNA + S-adenosyl-L-homocysteine + H(+)</text>
        <dbReference type="Rhea" id="RHEA:24140"/>
        <dbReference type="Rhea" id="RHEA-COMP:10239"/>
        <dbReference type="Rhea" id="RHEA-COMP:10241"/>
        <dbReference type="ChEBI" id="CHEBI:15378"/>
        <dbReference type="ChEBI" id="CHEBI:57856"/>
        <dbReference type="ChEBI" id="CHEBI:59789"/>
        <dbReference type="ChEBI" id="CHEBI:74269"/>
        <dbReference type="ChEBI" id="CHEBI:74445"/>
        <dbReference type="EC" id="2.1.1.185"/>
    </reaction>
</comment>
<comment type="subcellular location">
    <subcellularLocation>
        <location evidence="1">Cytoplasm</location>
    </subcellularLocation>
</comment>
<comment type="similarity">
    <text evidence="1">Belongs to the class IV-like SAM-binding methyltransferase superfamily. RNA methyltransferase TrmH family. RlmB subfamily.</text>
</comment>
<reference key="1">
    <citation type="journal article" date="2002" name="Nature">
        <title>Comparison of the genomes of two Xanthomonas pathogens with differing host specificities.</title>
        <authorList>
            <person name="da Silva A.C.R."/>
            <person name="Ferro J.A."/>
            <person name="Reinach F.C."/>
            <person name="Farah C.S."/>
            <person name="Furlan L.R."/>
            <person name="Quaggio R.B."/>
            <person name="Monteiro-Vitorello C.B."/>
            <person name="Van Sluys M.A."/>
            <person name="Almeida N.F. Jr."/>
            <person name="Alves L.M.C."/>
            <person name="do Amaral A.M."/>
            <person name="Bertolini M.C."/>
            <person name="Camargo L.E.A."/>
            <person name="Camarotte G."/>
            <person name="Cannavan F."/>
            <person name="Cardozo J."/>
            <person name="Chambergo F."/>
            <person name="Ciapina L.P."/>
            <person name="Cicarelli R.M.B."/>
            <person name="Coutinho L.L."/>
            <person name="Cursino-Santos J.R."/>
            <person name="El-Dorry H."/>
            <person name="Faria J.B."/>
            <person name="Ferreira A.J.S."/>
            <person name="Ferreira R.C.C."/>
            <person name="Ferro M.I.T."/>
            <person name="Formighieri E.F."/>
            <person name="Franco M.C."/>
            <person name="Greggio C.C."/>
            <person name="Gruber A."/>
            <person name="Katsuyama A.M."/>
            <person name="Kishi L.T."/>
            <person name="Leite R.P."/>
            <person name="Lemos E.G.M."/>
            <person name="Lemos M.V.F."/>
            <person name="Locali E.C."/>
            <person name="Machado M.A."/>
            <person name="Madeira A.M.B.N."/>
            <person name="Martinez-Rossi N.M."/>
            <person name="Martins E.C."/>
            <person name="Meidanis J."/>
            <person name="Menck C.F.M."/>
            <person name="Miyaki C.Y."/>
            <person name="Moon D.H."/>
            <person name="Moreira L.M."/>
            <person name="Novo M.T.M."/>
            <person name="Okura V.K."/>
            <person name="Oliveira M.C."/>
            <person name="Oliveira V.R."/>
            <person name="Pereira H.A."/>
            <person name="Rossi A."/>
            <person name="Sena J.A.D."/>
            <person name="Silva C."/>
            <person name="de Souza R.F."/>
            <person name="Spinola L.A.F."/>
            <person name="Takita M.A."/>
            <person name="Tamura R.E."/>
            <person name="Teixeira E.C."/>
            <person name="Tezza R.I.D."/>
            <person name="Trindade dos Santos M."/>
            <person name="Truffi D."/>
            <person name="Tsai S.M."/>
            <person name="White F.F."/>
            <person name="Setubal J.C."/>
            <person name="Kitajima J.P."/>
        </authorList>
    </citation>
    <scope>NUCLEOTIDE SEQUENCE [LARGE SCALE GENOMIC DNA]</scope>
    <source>
        <strain>306</strain>
    </source>
</reference>
<organism>
    <name type="scientific">Xanthomonas axonopodis pv. citri (strain 306)</name>
    <dbReference type="NCBI Taxonomy" id="190486"/>
    <lineage>
        <taxon>Bacteria</taxon>
        <taxon>Pseudomonadati</taxon>
        <taxon>Pseudomonadota</taxon>
        <taxon>Gammaproteobacteria</taxon>
        <taxon>Lysobacterales</taxon>
        <taxon>Lysobacteraceae</taxon>
        <taxon>Xanthomonas</taxon>
    </lineage>
</organism>
<dbReference type="EC" id="2.1.1.185" evidence="1"/>
<dbReference type="EMBL" id="AE008923">
    <property type="protein sequence ID" value="AAM36437.1"/>
    <property type="molecule type" value="Genomic_DNA"/>
</dbReference>
<dbReference type="RefSeq" id="WP_003487142.1">
    <property type="nucleotide sequence ID" value="NC_003919.1"/>
</dbReference>
<dbReference type="SMR" id="Q8PM64"/>
<dbReference type="GeneID" id="66910726"/>
<dbReference type="KEGG" id="xac:XAC1569"/>
<dbReference type="eggNOG" id="COG0566">
    <property type="taxonomic scope" value="Bacteria"/>
</dbReference>
<dbReference type="HOGENOM" id="CLU_021322_0_1_6"/>
<dbReference type="Proteomes" id="UP000000576">
    <property type="component" value="Chromosome"/>
</dbReference>
<dbReference type="GO" id="GO:0005829">
    <property type="term" value="C:cytosol"/>
    <property type="evidence" value="ECO:0007669"/>
    <property type="project" value="TreeGrafter"/>
</dbReference>
<dbReference type="GO" id="GO:0003723">
    <property type="term" value="F:RNA binding"/>
    <property type="evidence" value="ECO:0007669"/>
    <property type="project" value="InterPro"/>
</dbReference>
<dbReference type="GO" id="GO:0070039">
    <property type="term" value="F:rRNA (guanosine-2'-O-)-methyltransferase activity"/>
    <property type="evidence" value="ECO:0007669"/>
    <property type="project" value="UniProtKB-UniRule"/>
</dbReference>
<dbReference type="CDD" id="cd18103">
    <property type="entry name" value="SpoU-like_RlmB"/>
    <property type="match status" value="1"/>
</dbReference>
<dbReference type="FunFam" id="3.40.1280.10:FF:000021">
    <property type="entry name" value="23S rRNA (guanosine-2'-O-)-methyltransferase RlmB"/>
    <property type="match status" value="1"/>
</dbReference>
<dbReference type="FunFam" id="3.30.1330.30:FF:000029">
    <property type="entry name" value="tRNA/rRNA methyltransferase"/>
    <property type="match status" value="1"/>
</dbReference>
<dbReference type="Gene3D" id="3.30.1330.30">
    <property type="match status" value="1"/>
</dbReference>
<dbReference type="Gene3D" id="3.40.1280.10">
    <property type="match status" value="1"/>
</dbReference>
<dbReference type="HAMAP" id="MF_01887">
    <property type="entry name" value="23SrRNA_methyltr_B"/>
    <property type="match status" value="1"/>
</dbReference>
<dbReference type="InterPro" id="IPR024915">
    <property type="entry name" value="23S_rRNA_MeTrfase_RlmB"/>
</dbReference>
<dbReference type="InterPro" id="IPR029028">
    <property type="entry name" value="Alpha/beta_knot_MTases"/>
</dbReference>
<dbReference type="InterPro" id="IPR029064">
    <property type="entry name" value="Ribosomal_eL30-like_sf"/>
</dbReference>
<dbReference type="InterPro" id="IPR004441">
    <property type="entry name" value="rRNA_MeTrfase_TrmH"/>
</dbReference>
<dbReference type="InterPro" id="IPR001537">
    <property type="entry name" value="SpoU_MeTrfase"/>
</dbReference>
<dbReference type="InterPro" id="IPR013123">
    <property type="entry name" value="SpoU_subst-bd"/>
</dbReference>
<dbReference type="InterPro" id="IPR029026">
    <property type="entry name" value="tRNA_m1G_MTases_N"/>
</dbReference>
<dbReference type="NCBIfam" id="TIGR00186">
    <property type="entry name" value="rRNA_methyl_3"/>
    <property type="match status" value="1"/>
</dbReference>
<dbReference type="PANTHER" id="PTHR46429">
    <property type="entry name" value="23S RRNA (GUANOSINE-2'-O-)-METHYLTRANSFERASE RLMB"/>
    <property type="match status" value="1"/>
</dbReference>
<dbReference type="PANTHER" id="PTHR46429:SF1">
    <property type="entry name" value="23S RRNA (GUANOSINE-2'-O-)-METHYLTRANSFERASE RLMB"/>
    <property type="match status" value="1"/>
</dbReference>
<dbReference type="Pfam" id="PF00588">
    <property type="entry name" value="SpoU_methylase"/>
    <property type="match status" value="1"/>
</dbReference>
<dbReference type="Pfam" id="PF08032">
    <property type="entry name" value="SpoU_sub_bind"/>
    <property type="match status" value="1"/>
</dbReference>
<dbReference type="SMART" id="SM00967">
    <property type="entry name" value="SpoU_sub_bind"/>
    <property type="match status" value="1"/>
</dbReference>
<dbReference type="SUPFAM" id="SSF75217">
    <property type="entry name" value="alpha/beta knot"/>
    <property type="match status" value="1"/>
</dbReference>
<dbReference type="SUPFAM" id="SSF55315">
    <property type="entry name" value="L30e-like"/>
    <property type="match status" value="1"/>
</dbReference>